<reference key="1">
    <citation type="journal article" date="2004" name="Proc. Natl. Acad. Sci. U.S.A.">
        <title>Genome sequence of the enterobacterial phytopathogen Erwinia carotovora subsp. atroseptica and characterization of virulence factors.</title>
        <authorList>
            <person name="Bell K.S."/>
            <person name="Sebaihia M."/>
            <person name="Pritchard L."/>
            <person name="Holden M.T.G."/>
            <person name="Hyman L.J."/>
            <person name="Holeva M.C."/>
            <person name="Thomson N.R."/>
            <person name="Bentley S.D."/>
            <person name="Churcher L.J.C."/>
            <person name="Mungall K."/>
            <person name="Atkin R."/>
            <person name="Bason N."/>
            <person name="Brooks K."/>
            <person name="Chillingworth T."/>
            <person name="Clark K."/>
            <person name="Doggett J."/>
            <person name="Fraser A."/>
            <person name="Hance Z."/>
            <person name="Hauser H."/>
            <person name="Jagels K."/>
            <person name="Moule S."/>
            <person name="Norbertczak H."/>
            <person name="Ormond D."/>
            <person name="Price C."/>
            <person name="Quail M.A."/>
            <person name="Sanders M."/>
            <person name="Walker D."/>
            <person name="Whitehead S."/>
            <person name="Salmond G.P.C."/>
            <person name="Birch P.R.J."/>
            <person name="Parkhill J."/>
            <person name="Toth I.K."/>
        </authorList>
    </citation>
    <scope>NUCLEOTIDE SEQUENCE [LARGE SCALE GENOMIC DNA]</scope>
    <source>
        <strain>SCRI 1043 / ATCC BAA-672</strain>
    </source>
</reference>
<gene>
    <name evidence="1" type="primary">uxaC</name>
    <name type="ordered locus">ECA0645</name>
</gene>
<name>UXAC_PECAS</name>
<sequence>MPQFLSEDFLLDTEFARRLYHEYAVDQPIFDYHCHLPPEQIAENYRFKNLYDIWLKGDHYKWRAMRTNGVPERLCTGDASDWEKFEAWAATVPHTIGNPLYHWTHLELRRPFGVTGTLLSPSTAKGIWDRCNAMLERDDFTARGIMQQMNVKMVGTTDDPIDDLRHHKAVAQDSSFSIKVLPSWRPDKAFNIELATFNDYMAKLGEVSDTDIRRFSDLQTALTKRLDHFAAHGCKVSDHALDVVMFAEADDATLDKILARRLAGETLSEHEVAQFKTGVLVWLGAEYARRGWVQQYHIGALRNNNLRQFKLLGPDVGFDSINDRPLAQELSRLLSKQNEENLLPKTILYCLNPRDNEVLGTMIGNFQGEGMPGKMQFGSGWWFNDQKDGMQRQMTQLAQLGLLSRFVGMLTDSRSFLSYTRHEYFRRILCQMIGRWVEDGEAPADLPLLGEMVKNISFDNAKNYFAIEL</sequence>
<dbReference type="EC" id="5.3.1.12" evidence="1"/>
<dbReference type="EMBL" id="BX950851">
    <property type="protein sequence ID" value="CAG73560.1"/>
    <property type="molecule type" value="Genomic_DNA"/>
</dbReference>
<dbReference type="RefSeq" id="WP_011092262.1">
    <property type="nucleotide sequence ID" value="NC_004547.2"/>
</dbReference>
<dbReference type="SMR" id="Q6D9H0"/>
<dbReference type="STRING" id="218491.ECA0645"/>
<dbReference type="KEGG" id="eca:ECA0645"/>
<dbReference type="PATRIC" id="fig|218491.5.peg.640"/>
<dbReference type="eggNOG" id="COG1904">
    <property type="taxonomic scope" value="Bacteria"/>
</dbReference>
<dbReference type="HOGENOM" id="CLU_044465_1_0_6"/>
<dbReference type="OrthoDB" id="9766564at2"/>
<dbReference type="UniPathway" id="UPA00246"/>
<dbReference type="Proteomes" id="UP000007966">
    <property type="component" value="Chromosome"/>
</dbReference>
<dbReference type="GO" id="GO:0008880">
    <property type="term" value="F:glucuronate isomerase activity"/>
    <property type="evidence" value="ECO:0007669"/>
    <property type="project" value="UniProtKB-UniRule"/>
</dbReference>
<dbReference type="GO" id="GO:0019698">
    <property type="term" value="P:D-galacturonate catabolic process"/>
    <property type="evidence" value="ECO:0007669"/>
    <property type="project" value="TreeGrafter"/>
</dbReference>
<dbReference type="GO" id="GO:0042840">
    <property type="term" value="P:D-glucuronate catabolic process"/>
    <property type="evidence" value="ECO:0007669"/>
    <property type="project" value="TreeGrafter"/>
</dbReference>
<dbReference type="Gene3D" id="3.20.20.140">
    <property type="entry name" value="Metal-dependent hydrolases"/>
    <property type="match status" value="1"/>
</dbReference>
<dbReference type="Gene3D" id="1.10.2020.10">
    <property type="entry name" value="uronate isomerase, domain 2, chain A"/>
    <property type="match status" value="1"/>
</dbReference>
<dbReference type="HAMAP" id="MF_00675">
    <property type="entry name" value="UxaC"/>
    <property type="match status" value="1"/>
</dbReference>
<dbReference type="InterPro" id="IPR032466">
    <property type="entry name" value="Metal_Hydrolase"/>
</dbReference>
<dbReference type="InterPro" id="IPR003766">
    <property type="entry name" value="Uronate_isomerase"/>
</dbReference>
<dbReference type="NCBIfam" id="NF002794">
    <property type="entry name" value="PRK02925.1"/>
    <property type="match status" value="1"/>
</dbReference>
<dbReference type="PANTHER" id="PTHR30068">
    <property type="entry name" value="URONATE ISOMERASE"/>
    <property type="match status" value="1"/>
</dbReference>
<dbReference type="PANTHER" id="PTHR30068:SF4">
    <property type="entry name" value="URONATE ISOMERASE"/>
    <property type="match status" value="1"/>
</dbReference>
<dbReference type="Pfam" id="PF02614">
    <property type="entry name" value="UxaC"/>
    <property type="match status" value="1"/>
</dbReference>
<dbReference type="SUPFAM" id="SSF51556">
    <property type="entry name" value="Metallo-dependent hydrolases"/>
    <property type="match status" value="1"/>
</dbReference>
<comment type="catalytic activity">
    <reaction evidence="1">
        <text>D-glucuronate = D-fructuronate</text>
        <dbReference type="Rhea" id="RHEA:13049"/>
        <dbReference type="ChEBI" id="CHEBI:58720"/>
        <dbReference type="ChEBI" id="CHEBI:59863"/>
        <dbReference type="EC" id="5.3.1.12"/>
    </reaction>
</comment>
<comment type="catalytic activity">
    <reaction evidence="1">
        <text>aldehydo-D-galacturonate = keto-D-tagaturonate</text>
        <dbReference type="Rhea" id="RHEA:27702"/>
        <dbReference type="ChEBI" id="CHEBI:12952"/>
        <dbReference type="ChEBI" id="CHEBI:17886"/>
        <dbReference type="EC" id="5.3.1.12"/>
    </reaction>
</comment>
<comment type="pathway">
    <text evidence="1">Carbohydrate metabolism; pentose and glucuronate interconversion.</text>
</comment>
<comment type="similarity">
    <text evidence="1">Belongs to the metallo-dependent hydrolases superfamily. Uronate isomerase family.</text>
</comment>
<protein>
    <recommendedName>
        <fullName evidence="1">Uronate isomerase</fullName>
        <ecNumber evidence="1">5.3.1.12</ecNumber>
    </recommendedName>
    <alternativeName>
        <fullName evidence="1">Glucuronate isomerase</fullName>
    </alternativeName>
    <alternativeName>
        <fullName evidence="1">Uronic isomerase</fullName>
    </alternativeName>
</protein>
<evidence type="ECO:0000255" key="1">
    <source>
        <dbReference type="HAMAP-Rule" id="MF_00675"/>
    </source>
</evidence>
<feature type="chain" id="PRO_0000172774" description="Uronate isomerase">
    <location>
        <begin position="1"/>
        <end position="469"/>
    </location>
</feature>
<accession>Q6D9H0</accession>
<proteinExistence type="inferred from homology"/>
<organism>
    <name type="scientific">Pectobacterium atrosepticum (strain SCRI 1043 / ATCC BAA-672)</name>
    <name type="common">Erwinia carotovora subsp. atroseptica</name>
    <dbReference type="NCBI Taxonomy" id="218491"/>
    <lineage>
        <taxon>Bacteria</taxon>
        <taxon>Pseudomonadati</taxon>
        <taxon>Pseudomonadota</taxon>
        <taxon>Gammaproteobacteria</taxon>
        <taxon>Enterobacterales</taxon>
        <taxon>Pectobacteriaceae</taxon>
        <taxon>Pectobacterium</taxon>
    </lineage>
</organism>
<keyword id="KW-0413">Isomerase</keyword>
<keyword id="KW-1185">Reference proteome</keyword>